<name>GRPE1_STRAW</name>
<dbReference type="EMBL" id="BA000030">
    <property type="protein sequence ID" value="BAC72197.1"/>
    <property type="molecule type" value="Genomic_DNA"/>
</dbReference>
<dbReference type="SMR" id="Q82EX8"/>
<dbReference type="GeneID" id="41541564"/>
<dbReference type="KEGG" id="sma:SAVERM_4485"/>
<dbReference type="eggNOG" id="COG0576">
    <property type="taxonomic scope" value="Bacteria"/>
</dbReference>
<dbReference type="HOGENOM" id="CLU_057217_4_2_11"/>
<dbReference type="OrthoDB" id="5191115at2"/>
<dbReference type="Proteomes" id="UP000000428">
    <property type="component" value="Chromosome"/>
</dbReference>
<dbReference type="GO" id="GO:0005737">
    <property type="term" value="C:cytoplasm"/>
    <property type="evidence" value="ECO:0007669"/>
    <property type="project" value="UniProtKB-SubCell"/>
</dbReference>
<dbReference type="GO" id="GO:0000774">
    <property type="term" value="F:adenyl-nucleotide exchange factor activity"/>
    <property type="evidence" value="ECO:0007669"/>
    <property type="project" value="InterPro"/>
</dbReference>
<dbReference type="GO" id="GO:0042803">
    <property type="term" value="F:protein homodimerization activity"/>
    <property type="evidence" value="ECO:0007669"/>
    <property type="project" value="InterPro"/>
</dbReference>
<dbReference type="GO" id="GO:0051087">
    <property type="term" value="F:protein-folding chaperone binding"/>
    <property type="evidence" value="ECO:0007669"/>
    <property type="project" value="InterPro"/>
</dbReference>
<dbReference type="GO" id="GO:0051082">
    <property type="term" value="F:unfolded protein binding"/>
    <property type="evidence" value="ECO:0007669"/>
    <property type="project" value="TreeGrafter"/>
</dbReference>
<dbReference type="GO" id="GO:0006457">
    <property type="term" value="P:protein folding"/>
    <property type="evidence" value="ECO:0007669"/>
    <property type="project" value="InterPro"/>
</dbReference>
<dbReference type="CDD" id="cd00446">
    <property type="entry name" value="GrpE"/>
    <property type="match status" value="1"/>
</dbReference>
<dbReference type="FunFam" id="2.30.22.10:FF:000001">
    <property type="entry name" value="Protein GrpE"/>
    <property type="match status" value="1"/>
</dbReference>
<dbReference type="FunFam" id="3.90.20.20:FF:000010">
    <property type="entry name" value="Protein GrpE"/>
    <property type="match status" value="1"/>
</dbReference>
<dbReference type="Gene3D" id="3.90.20.20">
    <property type="match status" value="1"/>
</dbReference>
<dbReference type="Gene3D" id="2.30.22.10">
    <property type="entry name" value="Head domain of nucleotide exchange factor GrpE"/>
    <property type="match status" value="1"/>
</dbReference>
<dbReference type="HAMAP" id="MF_01151">
    <property type="entry name" value="GrpE"/>
    <property type="match status" value="1"/>
</dbReference>
<dbReference type="InterPro" id="IPR000740">
    <property type="entry name" value="GrpE"/>
</dbReference>
<dbReference type="InterPro" id="IPR013805">
    <property type="entry name" value="GrpE_coiled_coil"/>
</dbReference>
<dbReference type="InterPro" id="IPR009012">
    <property type="entry name" value="GrpE_head"/>
</dbReference>
<dbReference type="NCBIfam" id="NF010760">
    <property type="entry name" value="PRK14163.1"/>
    <property type="match status" value="1"/>
</dbReference>
<dbReference type="PANTHER" id="PTHR21237">
    <property type="entry name" value="GRPE PROTEIN"/>
    <property type="match status" value="1"/>
</dbReference>
<dbReference type="PANTHER" id="PTHR21237:SF23">
    <property type="entry name" value="GRPE PROTEIN HOMOLOG, MITOCHONDRIAL"/>
    <property type="match status" value="1"/>
</dbReference>
<dbReference type="Pfam" id="PF01025">
    <property type="entry name" value="GrpE"/>
    <property type="match status" value="1"/>
</dbReference>
<dbReference type="PRINTS" id="PR00773">
    <property type="entry name" value="GRPEPROTEIN"/>
</dbReference>
<dbReference type="SUPFAM" id="SSF58014">
    <property type="entry name" value="Coiled-coil domain of nucleotide exchange factor GrpE"/>
    <property type="match status" value="1"/>
</dbReference>
<dbReference type="SUPFAM" id="SSF51064">
    <property type="entry name" value="Head domain of nucleotide exchange factor GrpE"/>
    <property type="match status" value="1"/>
</dbReference>
<dbReference type="PROSITE" id="PS01071">
    <property type="entry name" value="GRPE"/>
    <property type="match status" value="1"/>
</dbReference>
<sequence>MTEETPGFDEKPDVPSGATPEDAEPKAAPSEGAAPAGDAAAAAQTAAQTAGLTAQLDQVRTALGERTADLQRLQAEYQNYRRRVERDRIAVKEIAIANLLTELLPTLDDIGRAREHGELVGGFKSVAESLETVAAKMGLQQFGKEGEPFDPTIHEALMHSYAPDVTETTCVAILQPGYRIGERTIRPARVAVAEPQPGAQTVKADEAEAADDKESGGPEEG</sequence>
<comment type="function">
    <text evidence="1">Participates actively in the response to hyperosmotic and heat shock by preventing the aggregation of stress-denatured proteins, in association with DnaK and GrpE. It is the nucleotide exchange factor for DnaK and may function as a thermosensor. Unfolded proteins bind initially to DnaJ; upon interaction with the DnaJ-bound protein, DnaK hydrolyzes its bound ATP, resulting in the formation of a stable complex. GrpE releases ADP from DnaK; ATP binding to DnaK triggers the release of the substrate protein, thus completing the reaction cycle. Several rounds of ATP-dependent interactions between DnaJ, DnaK and GrpE are required for fully efficient folding.</text>
</comment>
<comment type="subunit">
    <text evidence="1">Homodimer.</text>
</comment>
<comment type="subcellular location">
    <subcellularLocation>
        <location evidence="1">Cytoplasm</location>
    </subcellularLocation>
</comment>
<comment type="similarity">
    <text evidence="1">Belongs to the GrpE family.</text>
</comment>
<keyword id="KW-0143">Chaperone</keyword>
<keyword id="KW-0963">Cytoplasm</keyword>
<keyword id="KW-1185">Reference proteome</keyword>
<keyword id="KW-0346">Stress response</keyword>
<accession>Q82EX8</accession>
<evidence type="ECO:0000255" key="1">
    <source>
        <dbReference type="HAMAP-Rule" id="MF_01151"/>
    </source>
</evidence>
<evidence type="ECO:0000256" key="2">
    <source>
        <dbReference type="SAM" id="MobiDB-lite"/>
    </source>
</evidence>
<reference key="1">
    <citation type="journal article" date="2001" name="Proc. Natl. Acad. Sci. U.S.A.">
        <title>Genome sequence of an industrial microorganism Streptomyces avermitilis: deducing the ability of producing secondary metabolites.</title>
        <authorList>
            <person name="Omura S."/>
            <person name="Ikeda H."/>
            <person name="Ishikawa J."/>
            <person name="Hanamoto A."/>
            <person name="Takahashi C."/>
            <person name="Shinose M."/>
            <person name="Takahashi Y."/>
            <person name="Horikawa H."/>
            <person name="Nakazawa H."/>
            <person name="Osonoe T."/>
            <person name="Kikuchi H."/>
            <person name="Shiba T."/>
            <person name="Sakaki Y."/>
            <person name="Hattori M."/>
        </authorList>
    </citation>
    <scope>NUCLEOTIDE SEQUENCE [LARGE SCALE GENOMIC DNA]</scope>
    <source>
        <strain>ATCC 31267 / DSM 46492 / JCM 5070 / NBRC 14893 / NCIMB 12804 / NRRL 8165 / MA-4680</strain>
    </source>
</reference>
<reference key="2">
    <citation type="journal article" date="2003" name="Nat. Biotechnol.">
        <title>Complete genome sequence and comparative analysis of the industrial microorganism Streptomyces avermitilis.</title>
        <authorList>
            <person name="Ikeda H."/>
            <person name="Ishikawa J."/>
            <person name="Hanamoto A."/>
            <person name="Shinose M."/>
            <person name="Kikuchi H."/>
            <person name="Shiba T."/>
            <person name="Sakaki Y."/>
            <person name="Hattori M."/>
            <person name="Omura S."/>
        </authorList>
    </citation>
    <scope>NUCLEOTIDE SEQUENCE [LARGE SCALE GENOMIC DNA]</scope>
    <source>
        <strain>ATCC 31267 / DSM 46492 / JCM 5070 / NBRC 14893 / NCIMB 12804 / NRRL 8165 / MA-4680</strain>
    </source>
</reference>
<feature type="chain" id="PRO_0000113867" description="Protein GrpE 1">
    <location>
        <begin position="1"/>
        <end position="221"/>
    </location>
</feature>
<feature type="region of interest" description="Disordered" evidence="2">
    <location>
        <begin position="1"/>
        <end position="44"/>
    </location>
</feature>
<feature type="region of interest" description="Disordered" evidence="2">
    <location>
        <begin position="192"/>
        <end position="221"/>
    </location>
</feature>
<feature type="compositionally biased region" description="Low complexity" evidence="2">
    <location>
        <begin position="26"/>
        <end position="44"/>
    </location>
</feature>
<feature type="compositionally biased region" description="Basic and acidic residues" evidence="2">
    <location>
        <begin position="203"/>
        <end position="221"/>
    </location>
</feature>
<protein>
    <recommendedName>
        <fullName evidence="1">Protein GrpE 1</fullName>
    </recommendedName>
    <alternativeName>
        <fullName evidence="1">HSP-70 cofactor 1</fullName>
    </alternativeName>
</protein>
<organism>
    <name type="scientific">Streptomyces avermitilis (strain ATCC 31267 / DSM 46492 / JCM 5070 / NBRC 14893 / NCIMB 12804 / NRRL 8165 / MA-4680)</name>
    <dbReference type="NCBI Taxonomy" id="227882"/>
    <lineage>
        <taxon>Bacteria</taxon>
        <taxon>Bacillati</taxon>
        <taxon>Actinomycetota</taxon>
        <taxon>Actinomycetes</taxon>
        <taxon>Kitasatosporales</taxon>
        <taxon>Streptomycetaceae</taxon>
        <taxon>Streptomyces</taxon>
    </lineage>
</organism>
<proteinExistence type="inferred from homology"/>
<gene>
    <name evidence="1" type="primary">grpE1</name>
    <name type="ordered locus">SAV_4485</name>
</gene>